<name>Y48K_ELV</name>
<proteinExistence type="inferred from homology"/>
<sequence>MANGFSTSPRRPILHHSPRFNLGSSSRLFCESTPIFIGTIPLHCPKGTCPPAQSHGHSSLRTNLNSSPPRCPQNPGTEPSLQPLGKVLQCGLSRGLHETLKVLQTPREELPLQISSQLPTSPSRLQSVPTSQHKPAYREAILHPRLPDVFYAAPNLRFVRKLPKPSQSVRQPRRSSRKLNDRLVSKPRSVSVLNPQVDSPLHTRRALSRQLQSARQRPRLAENLCDPNSIPEPVRVRPGILGPSPFPSYREELSNTKSRFSEDKGSDFLPNPPSSNSSEPGLPGRPSQAPSCASENLRRPLHLHSSNPNSPHFRSRWIRKNSVKQARVQLGHISSLGQSPNLRPLDSLLQASRVLHATSVSSYKTQGASHEECFKTRSDGITSSHSGHLHHNDRVEHQLQQGPLLQCSQDSLAEPTYRPGTPSLPNFCIAAKELSSTQPS</sequence>
<organism>
    <name type="scientific">Erysimum latent virus</name>
    <name type="common">ELV</name>
    <dbReference type="NCBI Taxonomy" id="12152"/>
    <lineage>
        <taxon>Viruses</taxon>
        <taxon>Riboviria</taxon>
        <taxon>Orthornavirae</taxon>
        <taxon>Kitrinoviricota</taxon>
        <taxon>Alsuviricetes</taxon>
        <taxon>Tymovirales</taxon>
        <taxon>Tymoviridae</taxon>
        <taxon>Tymovirus</taxon>
        <taxon>Tymovirus erysimi</taxon>
    </lineage>
</organism>
<comment type="similarity">
    <text evidence="2">Belongs to the tymoviridae protein p69 family.</text>
</comment>
<accession>P35929</accession>
<organismHost>
    <name type="scientific">Erysimum</name>
    <dbReference type="NCBI Taxonomy" id="65352"/>
</organismHost>
<protein>
    <recommendedName>
        <fullName>Uncharacterized 48 kDa protein</fullName>
    </recommendedName>
</protein>
<dbReference type="PIR" id="JQ1554">
    <property type="entry name" value="JQ1554"/>
</dbReference>
<dbReference type="RefSeq" id="NP_047919.1">
    <property type="nucleotide sequence ID" value="NC_001977.1"/>
</dbReference>
<dbReference type="GeneID" id="1493963"/>
<dbReference type="KEGG" id="vg:1493963"/>
<dbReference type="OrthoDB" id="19527at10239"/>
<dbReference type="InterPro" id="IPR004935">
    <property type="entry name" value="45/70kDa_tymovirus"/>
</dbReference>
<dbReference type="Pfam" id="PF03251">
    <property type="entry name" value="Tymo_45kd_70kd"/>
    <property type="match status" value="1"/>
</dbReference>
<reference key="1">
    <citation type="journal article" date="1992" name="J. Gen. Virol.">
        <title>Comparisons of the genomic sequences of erysimum latent virus and other tymoviruses: a search for the molecular basis of their host specificities.</title>
        <authorList>
            <person name="Srifah P."/>
            <person name="Keese P."/>
            <person name="Weiller G."/>
            <person name="Gibbs A."/>
        </authorList>
    </citation>
    <scope>NUCLEOTIDE SEQUENCE</scope>
</reference>
<feature type="chain" id="PRO_0000222946" description="Uncharacterized 48 kDa protein">
    <location>
        <begin position="1"/>
        <end position="440"/>
    </location>
</feature>
<feature type="region of interest" description="Disordered" evidence="1">
    <location>
        <begin position="49"/>
        <end position="81"/>
    </location>
</feature>
<feature type="region of interest" description="Disordered" evidence="1">
    <location>
        <begin position="162"/>
        <end position="295"/>
    </location>
</feature>
<feature type="compositionally biased region" description="Polar residues" evidence="1">
    <location>
        <begin position="55"/>
        <end position="80"/>
    </location>
</feature>
<feature type="compositionally biased region" description="Basic and acidic residues" evidence="1">
    <location>
        <begin position="249"/>
        <end position="266"/>
    </location>
</feature>
<feature type="compositionally biased region" description="Low complexity" evidence="1">
    <location>
        <begin position="274"/>
        <end position="284"/>
    </location>
</feature>
<evidence type="ECO:0000256" key="1">
    <source>
        <dbReference type="SAM" id="MobiDB-lite"/>
    </source>
</evidence>
<evidence type="ECO:0000305" key="2"/>